<sequence>MATPATVSIEPTLAAIRARWCINSSKTTQSFNDPASMEEVVEYLKGTYSALRKSVACAKLKILHLKQRMQNATNFLARLMSCKNQASRSHHSTAKSAKSALSSDSGDGSDPDPEPETFPSAFITTPTNSIMLKAFFANISITEVAK</sequence>
<reference key="1">
    <citation type="submission" date="1997-01" db="EMBL/GenBank/DDBJ databases">
        <title>Sequence of minutes 4-25 of Escherichia coli.</title>
        <authorList>
            <person name="Chung E."/>
            <person name="Allen E."/>
            <person name="Araujo R."/>
            <person name="Aparicio A.M."/>
            <person name="Davis K."/>
            <person name="Duncan M."/>
            <person name="Federspiel N."/>
            <person name="Hyman R."/>
            <person name="Kalman S."/>
            <person name="Komp C."/>
            <person name="Kurdi O."/>
            <person name="Lew H."/>
            <person name="Lin D."/>
            <person name="Namath A."/>
            <person name="Oefner P."/>
            <person name="Roberts D."/>
            <person name="Schramm S."/>
            <person name="Davis R.W."/>
        </authorList>
    </citation>
    <scope>NUCLEOTIDE SEQUENCE [LARGE SCALE GENOMIC DNA]</scope>
    <source>
        <strain>K12 / MG1655 / ATCC 47076</strain>
    </source>
</reference>
<reference key="2">
    <citation type="journal article" date="1997" name="Science">
        <title>The complete genome sequence of Escherichia coli K-12.</title>
        <authorList>
            <person name="Blattner F.R."/>
            <person name="Plunkett G. III"/>
            <person name="Bloch C.A."/>
            <person name="Perna N.T."/>
            <person name="Burland V."/>
            <person name="Riley M."/>
            <person name="Collado-Vides J."/>
            <person name="Glasner J.D."/>
            <person name="Rode C.K."/>
            <person name="Mayhew G.F."/>
            <person name="Gregor J."/>
            <person name="Davis N.W."/>
            <person name="Kirkpatrick H.A."/>
            <person name="Goeden M.A."/>
            <person name="Rose D.J."/>
            <person name="Mau B."/>
            <person name="Shao Y."/>
        </authorList>
    </citation>
    <scope>NUCLEOTIDE SEQUENCE [LARGE SCALE GENOMIC DNA]</scope>
    <source>
        <strain>K12 / MG1655 / ATCC 47076</strain>
    </source>
</reference>
<reference key="3">
    <citation type="journal article" date="2006" name="Mol. Syst. Biol.">
        <title>Highly accurate genome sequences of Escherichia coli K-12 strains MG1655 and W3110.</title>
        <authorList>
            <person name="Hayashi K."/>
            <person name="Morooka N."/>
            <person name="Yamamoto Y."/>
            <person name="Fujita K."/>
            <person name="Isono K."/>
            <person name="Choi S."/>
            <person name="Ohtsubo E."/>
            <person name="Baba T."/>
            <person name="Wanner B.L."/>
            <person name="Mori H."/>
            <person name="Horiuchi T."/>
        </authorList>
    </citation>
    <scope>NUCLEOTIDE SEQUENCE [LARGE SCALE GENOMIC DNA]</scope>
    <source>
        <strain>K12 / W3110 / ATCC 27325 / DSM 5911</strain>
    </source>
</reference>
<protein>
    <recommendedName>
        <fullName>Uncharacterized protein YagN</fullName>
    </recommendedName>
</protein>
<evidence type="ECO:0000256" key="1">
    <source>
        <dbReference type="SAM" id="MobiDB-lite"/>
    </source>
</evidence>
<gene>
    <name type="primary">yagN</name>
    <name type="ordered locus">b0280</name>
    <name type="ordered locus">JW0274</name>
</gene>
<feature type="chain" id="PRO_0000168560" description="Uncharacterized protein YagN">
    <location>
        <begin position="1"/>
        <end position="146"/>
    </location>
</feature>
<feature type="region of interest" description="Disordered" evidence="1">
    <location>
        <begin position="87"/>
        <end position="121"/>
    </location>
</feature>
<feature type="compositionally biased region" description="Low complexity" evidence="1">
    <location>
        <begin position="94"/>
        <end position="106"/>
    </location>
</feature>
<name>YAGN_ECOLI</name>
<dbReference type="EMBL" id="U73857">
    <property type="protein sequence ID" value="AAB18009.1"/>
    <property type="molecule type" value="Genomic_DNA"/>
</dbReference>
<dbReference type="EMBL" id="U00096">
    <property type="protein sequence ID" value="AAC73383.1"/>
    <property type="molecule type" value="Genomic_DNA"/>
</dbReference>
<dbReference type="EMBL" id="AP009048">
    <property type="protein sequence ID" value="BAE76064.1"/>
    <property type="molecule type" value="Genomic_DNA"/>
</dbReference>
<dbReference type="PIR" id="H64753">
    <property type="entry name" value="H64753"/>
</dbReference>
<dbReference type="RefSeq" id="NP_414814.1">
    <property type="nucleotide sequence ID" value="NC_000913.3"/>
</dbReference>
<dbReference type="RefSeq" id="WP_000224818.1">
    <property type="nucleotide sequence ID" value="NZ_LN832404.1"/>
</dbReference>
<dbReference type="SMR" id="P71297"/>
<dbReference type="BioGRID" id="4259783">
    <property type="interactions" value="8"/>
</dbReference>
<dbReference type="FunCoup" id="P71297">
    <property type="interactions" value="8"/>
</dbReference>
<dbReference type="IntAct" id="P71297">
    <property type="interactions" value="1"/>
</dbReference>
<dbReference type="STRING" id="511145.b0280"/>
<dbReference type="PaxDb" id="511145-b0280"/>
<dbReference type="EnsemblBacteria" id="AAC73383">
    <property type="protein sequence ID" value="AAC73383"/>
    <property type="gene ID" value="b0280"/>
</dbReference>
<dbReference type="GeneID" id="945349"/>
<dbReference type="KEGG" id="ecj:JW0274"/>
<dbReference type="KEGG" id="eco:b0280"/>
<dbReference type="KEGG" id="ecoc:C3026_01360"/>
<dbReference type="KEGG" id="ecoc:C3026_23995"/>
<dbReference type="PATRIC" id="fig|83333.103.peg.1036"/>
<dbReference type="EchoBASE" id="EB3323"/>
<dbReference type="HOGENOM" id="CLU_1774462_0_0_6"/>
<dbReference type="InParanoid" id="P71297"/>
<dbReference type="OrthoDB" id="6637954at2"/>
<dbReference type="BioCyc" id="EcoCyc:G6151-MONOMER"/>
<dbReference type="PRO" id="PR:P71297"/>
<dbReference type="Proteomes" id="UP000000625">
    <property type="component" value="Chromosome"/>
</dbReference>
<organism>
    <name type="scientific">Escherichia coli (strain K12)</name>
    <dbReference type="NCBI Taxonomy" id="83333"/>
    <lineage>
        <taxon>Bacteria</taxon>
        <taxon>Pseudomonadati</taxon>
        <taxon>Pseudomonadota</taxon>
        <taxon>Gammaproteobacteria</taxon>
        <taxon>Enterobacterales</taxon>
        <taxon>Enterobacteriaceae</taxon>
        <taxon>Escherichia</taxon>
    </lineage>
</organism>
<accession>P71297</accession>
<accession>Q2MCE2</accession>
<proteinExistence type="predicted"/>
<keyword id="KW-1185">Reference proteome</keyword>